<evidence type="ECO:0000250" key="1"/>
<evidence type="ECO:0000305" key="2"/>
<proteinExistence type="inferred from homology"/>
<accession>P14836</accession>
<name>CAPSD_AMCV</name>
<organism>
    <name type="scientific">Artichoke mottled crinkle virus</name>
    <name type="common">AMCV</name>
    <dbReference type="NCBI Taxonomy" id="12142"/>
    <lineage>
        <taxon>Viruses</taxon>
        <taxon>Riboviria</taxon>
        <taxon>Orthornavirae</taxon>
        <taxon>Kitrinoviricota</taxon>
        <taxon>Tolucaviricetes</taxon>
        <taxon>Tolivirales</taxon>
        <taxon>Tombusviridae</taxon>
        <taxon>Procedovirinae</taxon>
        <taxon>Tombusvirus</taxon>
        <taxon>Tombusvirus cynarae</taxon>
    </lineage>
</organism>
<protein>
    <recommendedName>
        <fullName>Capsid protein</fullName>
    </recommendedName>
    <alternativeName>
        <fullName>Coat protein</fullName>
    </alternativeName>
    <alternativeName>
        <fullName>p41</fullName>
    </alternativeName>
</protein>
<organismHost>
    <name type="scientific">Cynara cardunculus var. scolymus</name>
    <name type="common">Globe artichoke</name>
    <name type="synonym">Cynara scolymus</name>
    <dbReference type="NCBI Taxonomy" id="59895"/>
</organismHost>
<sequence>MAMVKRNNNTGLIPVSTKQLMALGAAAGASALQGFVRNNGAAIVGKVVDVGQKVYKAVKKRGGKKQQQIKHVGGTGGAIMAPVAVTRQLTGSKPKFTGKTSGSVTVTHREYLSQVNMSTGFQVNGGIVGNLLQLNPLNGTLFSWLPAIASNFDQYSFNSVLLHYVPLCATTEVGRVAMYFDKDSEDPEPADRVELANYSVLAETAPWAERALWVPTDRIKRFCDDSSTLDHKLIDLGQLGVATYGGAGTNAVGDIFISYSVTLYFPQPTNTLLSTRRLDLAGTPVTASGPGYILLTRTPTVLTMTFRATGTFVISGAYRCLTSTVLGLTGGVNVNSITVVDNVGTSSSFFINCTVSNLPSVITFTTTGITSATIQCNRATRQNDVSLI</sequence>
<reference key="1">
    <citation type="journal article" date="1990" name="Nucleic Acids Res.">
        <title>Nucleotide sequence of the 3'-terminal region of artichoke mottled crinkle tombusvirus RNA.</title>
        <authorList>
            <person name="Grieco F."/>
            <person name="Gallitelli D."/>
        </authorList>
    </citation>
    <scope>NUCLEOTIDE SEQUENCE [GENOMIC RNA]</scope>
    <source>
        <strain>Bari-Dr. Gallitelli isolate</strain>
    </source>
</reference>
<reference key="2">
    <citation type="journal article" date="1989" name="Plant Mol. Biol.">
        <title>cDNA cloning of artichoke mottled crinkle virus RNA and localization and sequencing of the coat protein gene.</title>
        <authorList>
            <person name="Tavazza M."/>
            <person name="Lucioli A."/>
            <person name="Ancora G."/>
            <person name="Benvenuto E."/>
        </authorList>
    </citation>
    <scope>NUCLEOTIDE SEQUENCE [GENOMIC RNA]</scope>
    <source>
        <strain>Bari-Dr. Gallitelli isolate</strain>
    </source>
</reference>
<reference key="3">
    <citation type="submission" date="1991-10" db="EMBL/GenBank/DDBJ databases">
        <authorList>
            <person name="Tavazza M."/>
        </authorList>
    </citation>
    <scope>SEQUENCE REVISION</scope>
</reference>
<keyword id="KW-0167">Capsid protein</keyword>
<keyword id="KW-0694">RNA-binding</keyword>
<keyword id="KW-1142">T=3 icosahedral capsid protein</keyword>
<keyword id="KW-0946">Virion</keyword>
<dbReference type="EMBL" id="X51456">
    <property type="protein sequence ID" value="CAA35821.1"/>
    <property type="molecule type" value="Genomic_RNA"/>
</dbReference>
<dbReference type="EMBL" id="X16060">
    <property type="protein sequence ID" value="CAA34196.1"/>
    <property type="molecule type" value="Genomic_RNA"/>
</dbReference>
<dbReference type="EMBL" id="X62493">
    <property type="protein sequence ID" value="CAA44357.1"/>
    <property type="molecule type" value="Genomic_RNA"/>
</dbReference>
<dbReference type="PIR" id="S08428">
    <property type="entry name" value="VCVGAC"/>
</dbReference>
<dbReference type="PIR" id="S24926">
    <property type="entry name" value="S24926"/>
</dbReference>
<dbReference type="RefSeq" id="NP_039810.1">
    <property type="nucleotide sequence ID" value="NC_001339.1"/>
</dbReference>
<dbReference type="SMR" id="P14836"/>
<dbReference type="KEGG" id="vg:1493940"/>
<dbReference type="OrthoDB" id="10131at10239"/>
<dbReference type="Proteomes" id="UP000202336">
    <property type="component" value="Genome"/>
</dbReference>
<dbReference type="GO" id="GO:0039617">
    <property type="term" value="C:T=3 icosahedral viral capsid"/>
    <property type="evidence" value="ECO:0007669"/>
    <property type="project" value="UniProtKB-KW"/>
</dbReference>
<dbReference type="GO" id="GO:0003723">
    <property type="term" value="F:RNA binding"/>
    <property type="evidence" value="ECO:0007669"/>
    <property type="project" value="UniProtKB-KW"/>
</dbReference>
<dbReference type="GO" id="GO:0005198">
    <property type="term" value="F:structural molecule activity"/>
    <property type="evidence" value="ECO:0007669"/>
    <property type="project" value="InterPro"/>
</dbReference>
<dbReference type="Gene3D" id="2.60.120.20">
    <property type="match status" value="1"/>
</dbReference>
<dbReference type="InterPro" id="IPR000937">
    <property type="entry name" value="Capsid_prot_S-dom_vir"/>
</dbReference>
<dbReference type="InterPro" id="IPR055068">
    <property type="entry name" value="Coat_P"/>
</dbReference>
<dbReference type="InterPro" id="IPR029053">
    <property type="entry name" value="Viral_coat"/>
</dbReference>
<dbReference type="Pfam" id="PF22402">
    <property type="entry name" value="Coat_P"/>
    <property type="match status" value="1"/>
</dbReference>
<dbReference type="Pfam" id="PF00729">
    <property type="entry name" value="Viral_coat"/>
    <property type="match status" value="1"/>
</dbReference>
<dbReference type="PRINTS" id="PR00233">
    <property type="entry name" value="ICOSAHEDRAL"/>
</dbReference>
<dbReference type="SUPFAM" id="SSF88633">
    <property type="entry name" value="Positive stranded ssRNA viruses"/>
    <property type="match status" value="1"/>
</dbReference>
<dbReference type="PROSITE" id="PS00555">
    <property type="entry name" value="ICOSAH_VIR_COAT_S"/>
    <property type="match status" value="1"/>
</dbReference>
<gene>
    <name type="ORF">ORF2</name>
</gene>
<comment type="function">
    <text>Capsid protein self-assembles to form an icosahedral capsid with a T=3 symmetry, about 32-35 nm in diameter, and consisting of 180 capsid proteins.</text>
</comment>
<comment type="subunit">
    <text evidence="2">Homomultimer.</text>
</comment>
<comment type="subcellular location">
    <subcellularLocation>
        <location evidence="2">Virion</location>
    </subcellularLocation>
</comment>
<comment type="similarity">
    <text evidence="2">Belongs to the icosahedral plant coat protein family.</text>
</comment>
<feature type="chain" id="PRO_0000222859" description="Capsid protein">
    <location>
        <begin position="1"/>
        <end position="388"/>
    </location>
</feature>
<feature type="region of interest" description="R domain, interaction with RNA">
    <location>
        <begin position="1"/>
        <end position="102"/>
    </location>
</feature>
<feature type="region of interest" description="Involved in encapsidation" evidence="1">
    <location>
        <begin position="56"/>
        <end position="61"/>
    </location>
</feature>
<feature type="region of interest" description="S domain, virion shell">
    <location>
        <begin position="103"/>
        <end position="263"/>
    </location>
</feature>
<feature type="region of interest" description="P domain, projecting">
    <location>
        <begin position="264"/>
        <end position="388"/>
    </location>
</feature>
<feature type="sequence conflict" description="In Ref. 1; CAA35821." evidence="2" ref="1">
    <original>T</original>
    <variation>M</variation>
    <location>
        <position position="17"/>
    </location>
</feature>
<feature type="sequence conflict" description="In Ref. 1; CAA35821." evidence="2" ref="1">
    <original>A</original>
    <variation>R</variation>
    <location>
        <position position="149"/>
    </location>
</feature>
<feature type="sequence conflict" description="In Ref. 1; CAA35821." evidence="2" ref="1">
    <original>L</original>
    <variation>I</variation>
    <location>
        <position position="273"/>
    </location>
</feature>
<feature type="sequence conflict" description="In Ref. 1; CAA35821." evidence="2" ref="1">
    <original>L</original>
    <variation>I</variation>
    <location>
        <position position="280"/>
    </location>
</feature>
<feature type="sequence conflict" description="In Ref. 1; CAA35821." evidence="2" ref="1">
    <original>FR</original>
    <variation>IC</variation>
    <location>
        <begin position="306"/>
        <end position="307"/>
    </location>
</feature>
<feature type="sequence conflict" description="In Ref. 1; CAA35821." evidence="2" ref="1">
    <original>V</original>
    <variation>L</variation>
    <location>
        <position position="385"/>
    </location>
</feature>